<accession>A9IUL1</accession>
<proteinExistence type="inferred from homology"/>
<evidence type="ECO:0000255" key="1">
    <source>
        <dbReference type="HAMAP-Rule" id="MF_01570"/>
    </source>
</evidence>
<organism>
    <name type="scientific">Bartonella tribocorum (strain CIP 105476 / IBS 506)</name>
    <dbReference type="NCBI Taxonomy" id="382640"/>
    <lineage>
        <taxon>Bacteria</taxon>
        <taxon>Pseudomonadati</taxon>
        <taxon>Pseudomonadota</taxon>
        <taxon>Alphaproteobacteria</taxon>
        <taxon>Hyphomicrobiales</taxon>
        <taxon>Bartonellaceae</taxon>
        <taxon>Bartonella</taxon>
    </lineage>
</organism>
<gene>
    <name evidence="1" type="primary">proS</name>
    <name type="ordered locus">BT_1201</name>
</gene>
<keyword id="KW-0030">Aminoacyl-tRNA synthetase</keyword>
<keyword id="KW-0067">ATP-binding</keyword>
<keyword id="KW-0963">Cytoplasm</keyword>
<keyword id="KW-0436">Ligase</keyword>
<keyword id="KW-0547">Nucleotide-binding</keyword>
<keyword id="KW-0648">Protein biosynthesis</keyword>
<protein>
    <recommendedName>
        <fullName evidence="1">Proline--tRNA ligase</fullName>
        <ecNumber evidence="1">6.1.1.15</ecNumber>
    </recommendedName>
    <alternativeName>
        <fullName evidence="1">Prolyl-tRNA synthetase</fullName>
        <shortName evidence="1">ProRS</shortName>
    </alternativeName>
</protein>
<name>SYP_BART1</name>
<sequence length="441" mass="50454">MRLSQYFLPLLKENPKEAEIVSHRFMLRAGMIRQQTSGIYSWLPLGKKVLDKVCKIIREEQERAGAIEILMPTIQSADLWRESGRYDDYGLEMLRIKDRQKRDLLYGPTNEEMVTDIFRSYVRSYKDLPLNLYHIQWKFRDEIRPRFGVMRAREFLMKDAYSFDLDYEGSKTSYNRMFVAYLRTFSRLGLKAIPMRADTGPIGGKLSHEFIILAETGESAIFCDKQFLELSVPNSSIDFSDKAVLDDTVKQWTSFYAATEEMHNEEEWARLSEENRLSARGIEVGHIFHFGTKYSAPMEAKVMGQDGKEHVVSMGSYGIGPSRLVAAAIEASHDEKGIIWPKSMAPFDFGIINMKPDDEKCTQACEFLYQGLKDAGFDPFLDDRNERPGSKFATMDLIGLPTQIIVGPNSIAHNEVEIKDRKTGAKKSLKVEDVLSQLSIL</sequence>
<comment type="function">
    <text evidence="1">Catalyzes the attachment of proline to tRNA(Pro) in a two-step reaction: proline is first activated by ATP to form Pro-AMP and then transferred to the acceptor end of tRNA(Pro).</text>
</comment>
<comment type="catalytic activity">
    <reaction evidence="1">
        <text>tRNA(Pro) + L-proline + ATP = L-prolyl-tRNA(Pro) + AMP + diphosphate</text>
        <dbReference type="Rhea" id="RHEA:14305"/>
        <dbReference type="Rhea" id="RHEA-COMP:9700"/>
        <dbReference type="Rhea" id="RHEA-COMP:9702"/>
        <dbReference type="ChEBI" id="CHEBI:30616"/>
        <dbReference type="ChEBI" id="CHEBI:33019"/>
        <dbReference type="ChEBI" id="CHEBI:60039"/>
        <dbReference type="ChEBI" id="CHEBI:78442"/>
        <dbReference type="ChEBI" id="CHEBI:78532"/>
        <dbReference type="ChEBI" id="CHEBI:456215"/>
        <dbReference type="EC" id="6.1.1.15"/>
    </reaction>
</comment>
<comment type="subunit">
    <text evidence="1">Homodimer.</text>
</comment>
<comment type="subcellular location">
    <subcellularLocation>
        <location evidence="1">Cytoplasm</location>
    </subcellularLocation>
</comment>
<comment type="similarity">
    <text evidence="1">Belongs to the class-II aminoacyl-tRNA synthetase family. ProS type 2 subfamily.</text>
</comment>
<feature type="chain" id="PRO_1000087860" description="Proline--tRNA ligase">
    <location>
        <begin position="1"/>
        <end position="441"/>
    </location>
</feature>
<dbReference type="EC" id="6.1.1.15" evidence="1"/>
<dbReference type="EMBL" id="AM260525">
    <property type="protein sequence ID" value="CAK01571.1"/>
    <property type="molecule type" value="Genomic_DNA"/>
</dbReference>
<dbReference type="RefSeq" id="WP_012231774.1">
    <property type="nucleotide sequence ID" value="NC_010161.1"/>
</dbReference>
<dbReference type="SMR" id="A9IUL1"/>
<dbReference type="KEGG" id="btr:BT_1201"/>
<dbReference type="eggNOG" id="COG0442">
    <property type="taxonomic scope" value="Bacteria"/>
</dbReference>
<dbReference type="HOGENOM" id="CLU_016739_4_2_5"/>
<dbReference type="Proteomes" id="UP000001592">
    <property type="component" value="Chromosome"/>
</dbReference>
<dbReference type="GO" id="GO:0005829">
    <property type="term" value="C:cytosol"/>
    <property type="evidence" value="ECO:0007669"/>
    <property type="project" value="TreeGrafter"/>
</dbReference>
<dbReference type="GO" id="GO:0005524">
    <property type="term" value="F:ATP binding"/>
    <property type="evidence" value="ECO:0007669"/>
    <property type="project" value="UniProtKB-UniRule"/>
</dbReference>
<dbReference type="GO" id="GO:0004827">
    <property type="term" value="F:proline-tRNA ligase activity"/>
    <property type="evidence" value="ECO:0007669"/>
    <property type="project" value="UniProtKB-UniRule"/>
</dbReference>
<dbReference type="GO" id="GO:0006433">
    <property type="term" value="P:prolyl-tRNA aminoacylation"/>
    <property type="evidence" value="ECO:0007669"/>
    <property type="project" value="UniProtKB-UniRule"/>
</dbReference>
<dbReference type="CDD" id="cd00861">
    <property type="entry name" value="ProRS_anticodon_short"/>
    <property type="match status" value="1"/>
</dbReference>
<dbReference type="CDD" id="cd00779">
    <property type="entry name" value="ProRS_core_prok"/>
    <property type="match status" value="1"/>
</dbReference>
<dbReference type="FunFam" id="3.30.930.10:FF:000042">
    <property type="entry name" value="probable proline--tRNA ligase, mitochondrial"/>
    <property type="match status" value="1"/>
</dbReference>
<dbReference type="FunFam" id="3.40.50.800:FF:000032">
    <property type="entry name" value="Proline--tRNA ligase"/>
    <property type="match status" value="1"/>
</dbReference>
<dbReference type="Gene3D" id="3.40.50.800">
    <property type="entry name" value="Anticodon-binding domain"/>
    <property type="match status" value="1"/>
</dbReference>
<dbReference type="Gene3D" id="3.30.930.10">
    <property type="entry name" value="Bira Bifunctional Protein, Domain 2"/>
    <property type="match status" value="1"/>
</dbReference>
<dbReference type="HAMAP" id="MF_01570">
    <property type="entry name" value="Pro_tRNA_synth_type2"/>
    <property type="match status" value="1"/>
</dbReference>
<dbReference type="InterPro" id="IPR002314">
    <property type="entry name" value="aa-tRNA-synt_IIb"/>
</dbReference>
<dbReference type="InterPro" id="IPR006195">
    <property type="entry name" value="aa-tRNA-synth_II"/>
</dbReference>
<dbReference type="InterPro" id="IPR045864">
    <property type="entry name" value="aa-tRNA-synth_II/BPL/LPL"/>
</dbReference>
<dbReference type="InterPro" id="IPR004154">
    <property type="entry name" value="Anticodon-bd"/>
</dbReference>
<dbReference type="InterPro" id="IPR036621">
    <property type="entry name" value="Anticodon-bd_dom_sf"/>
</dbReference>
<dbReference type="InterPro" id="IPR002316">
    <property type="entry name" value="Pro-tRNA-ligase_IIa"/>
</dbReference>
<dbReference type="InterPro" id="IPR004500">
    <property type="entry name" value="Pro-tRNA-synth_IIa_bac-type"/>
</dbReference>
<dbReference type="InterPro" id="IPR050062">
    <property type="entry name" value="Pro-tRNA_synthetase"/>
</dbReference>
<dbReference type="InterPro" id="IPR023716">
    <property type="entry name" value="Prolyl-tRNA_ligase_IIa_type2"/>
</dbReference>
<dbReference type="InterPro" id="IPR044140">
    <property type="entry name" value="ProRS_anticodon_short"/>
</dbReference>
<dbReference type="InterPro" id="IPR033730">
    <property type="entry name" value="ProRS_core_prok"/>
</dbReference>
<dbReference type="NCBIfam" id="NF008979">
    <property type="entry name" value="PRK12325.1"/>
    <property type="match status" value="1"/>
</dbReference>
<dbReference type="NCBIfam" id="TIGR00409">
    <property type="entry name" value="proS_fam_II"/>
    <property type="match status" value="1"/>
</dbReference>
<dbReference type="PANTHER" id="PTHR42753">
    <property type="entry name" value="MITOCHONDRIAL RIBOSOME PROTEIN L39/PROLYL-TRNA LIGASE FAMILY MEMBER"/>
    <property type="match status" value="1"/>
</dbReference>
<dbReference type="PANTHER" id="PTHR42753:SF2">
    <property type="entry name" value="PROLINE--TRNA LIGASE"/>
    <property type="match status" value="1"/>
</dbReference>
<dbReference type="Pfam" id="PF03129">
    <property type="entry name" value="HGTP_anticodon"/>
    <property type="match status" value="1"/>
</dbReference>
<dbReference type="Pfam" id="PF00587">
    <property type="entry name" value="tRNA-synt_2b"/>
    <property type="match status" value="1"/>
</dbReference>
<dbReference type="PRINTS" id="PR01046">
    <property type="entry name" value="TRNASYNTHPRO"/>
</dbReference>
<dbReference type="SUPFAM" id="SSF52954">
    <property type="entry name" value="Class II aaRS ABD-related"/>
    <property type="match status" value="1"/>
</dbReference>
<dbReference type="SUPFAM" id="SSF55681">
    <property type="entry name" value="Class II aaRS and biotin synthetases"/>
    <property type="match status" value="1"/>
</dbReference>
<dbReference type="PROSITE" id="PS50862">
    <property type="entry name" value="AA_TRNA_LIGASE_II"/>
    <property type="match status" value="1"/>
</dbReference>
<reference key="1">
    <citation type="journal article" date="2007" name="Nat. Genet.">
        <title>Genomic analysis of Bartonella identifies type IV secretion systems as host adaptability factors.</title>
        <authorList>
            <person name="Saenz H.L."/>
            <person name="Engel P."/>
            <person name="Stoeckli M.C."/>
            <person name="Lanz C."/>
            <person name="Raddatz G."/>
            <person name="Vayssier-Taussat M."/>
            <person name="Birtles R."/>
            <person name="Schuster S.C."/>
            <person name="Dehio C."/>
        </authorList>
    </citation>
    <scope>NUCLEOTIDE SEQUENCE [LARGE SCALE GENOMIC DNA]</scope>
    <source>
        <strain>CIP 105476 / IBS 506</strain>
    </source>
</reference>